<reference key="1">
    <citation type="journal article" date="2011" name="J. Bacteriol.">
        <title>Complete genome sequence of the plant growth-promoting endophyte Burkholderia phytofirmans strain PsJN.</title>
        <authorList>
            <person name="Weilharter A."/>
            <person name="Mitter B."/>
            <person name="Shin M.V."/>
            <person name="Chain P.S."/>
            <person name="Nowak J."/>
            <person name="Sessitsch A."/>
        </authorList>
    </citation>
    <scope>NUCLEOTIDE SEQUENCE [LARGE SCALE GENOMIC DNA]</scope>
    <source>
        <strain>DSM 17436 / LMG 22146 / PsJN</strain>
    </source>
</reference>
<organism>
    <name type="scientific">Paraburkholderia phytofirmans (strain DSM 17436 / LMG 22146 / PsJN)</name>
    <name type="common">Burkholderia phytofirmans</name>
    <dbReference type="NCBI Taxonomy" id="398527"/>
    <lineage>
        <taxon>Bacteria</taxon>
        <taxon>Pseudomonadati</taxon>
        <taxon>Pseudomonadota</taxon>
        <taxon>Betaproteobacteria</taxon>
        <taxon>Burkholderiales</taxon>
        <taxon>Burkholderiaceae</taxon>
        <taxon>Paraburkholderia</taxon>
    </lineage>
</organism>
<comment type="similarity">
    <text evidence="1">Belongs to the UPF0434 family.</text>
</comment>
<protein>
    <recommendedName>
        <fullName evidence="1">UPF0434 protein Bphyt_3197</fullName>
    </recommendedName>
</protein>
<proteinExistence type="inferred from homology"/>
<gene>
    <name type="ordered locus">Bphyt_3197</name>
</gene>
<dbReference type="EMBL" id="CP001052">
    <property type="protein sequence ID" value="ACD17589.1"/>
    <property type="molecule type" value="Genomic_DNA"/>
</dbReference>
<dbReference type="RefSeq" id="WP_007180583.1">
    <property type="nucleotide sequence ID" value="NC_010681.1"/>
</dbReference>
<dbReference type="SMR" id="B2T6M2"/>
<dbReference type="STRING" id="398527.Bphyt_3197"/>
<dbReference type="KEGG" id="bpy:Bphyt_3197"/>
<dbReference type="eggNOG" id="COG2835">
    <property type="taxonomic scope" value="Bacteria"/>
</dbReference>
<dbReference type="HOGENOM" id="CLU_155659_3_0_4"/>
<dbReference type="OrthoDB" id="9812205at2"/>
<dbReference type="Proteomes" id="UP000001739">
    <property type="component" value="Chromosome 1"/>
</dbReference>
<dbReference type="GO" id="GO:0005829">
    <property type="term" value="C:cytosol"/>
    <property type="evidence" value="ECO:0007669"/>
    <property type="project" value="TreeGrafter"/>
</dbReference>
<dbReference type="FunFam" id="2.20.25.10:FF:000002">
    <property type="entry name" value="UPF0434 protein YcaR"/>
    <property type="match status" value="1"/>
</dbReference>
<dbReference type="Gene3D" id="2.20.25.10">
    <property type="match status" value="1"/>
</dbReference>
<dbReference type="HAMAP" id="MF_01187">
    <property type="entry name" value="UPF0434"/>
    <property type="match status" value="1"/>
</dbReference>
<dbReference type="InterPro" id="IPR005651">
    <property type="entry name" value="Trm112-like"/>
</dbReference>
<dbReference type="PANTHER" id="PTHR33505:SF4">
    <property type="entry name" value="PROTEIN PREY, MITOCHONDRIAL"/>
    <property type="match status" value="1"/>
</dbReference>
<dbReference type="PANTHER" id="PTHR33505">
    <property type="entry name" value="ZGC:162634"/>
    <property type="match status" value="1"/>
</dbReference>
<dbReference type="Pfam" id="PF03966">
    <property type="entry name" value="Trm112p"/>
    <property type="match status" value="1"/>
</dbReference>
<dbReference type="SUPFAM" id="SSF158997">
    <property type="entry name" value="Trm112p-like"/>
    <property type="match status" value="1"/>
</dbReference>
<sequence>MDARLLEILVCPICKGPLSYDRAAQELICNADKLAYPIRDGIPVMLVDEARQTVEGTPVDLNPGSVA</sequence>
<name>Y3197_PARPJ</name>
<feature type="chain" id="PRO_1000138296" description="UPF0434 protein Bphyt_3197">
    <location>
        <begin position="1"/>
        <end position="67"/>
    </location>
</feature>
<accession>B2T6M2</accession>
<evidence type="ECO:0000255" key="1">
    <source>
        <dbReference type="HAMAP-Rule" id="MF_01187"/>
    </source>
</evidence>